<dbReference type="EC" id="2.7.4.8"/>
<dbReference type="EMBL" id="AE004091">
    <property type="protein sequence ID" value="AAG08721.1"/>
    <property type="molecule type" value="Genomic_DNA"/>
</dbReference>
<dbReference type="PIR" id="F82978">
    <property type="entry name" value="F82978"/>
</dbReference>
<dbReference type="RefSeq" id="NP_254023.1">
    <property type="nucleotide sequence ID" value="NC_002516.2"/>
</dbReference>
<dbReference type="RefSeq" id="WP_003098317.1">
    <property type="nucleotide sequence ID" value="NZ_QZGE01000020.1"/>
</dbReference>
<dbReference type="PDB" id="7U5F">
    <property type="method" value="X-ray"/>
    <property type="resolution" value="2.00 A"/>
    <property type="chains" value="A/B/C/D=1-203"/>
</dbReference>
<dbReference type="PDB" id="8EGL">
    <property type="method" value="X-ray"/>
    <property type="resolution" value="2.35 A"/>
    <property type="chains" value="A/B/C/D/E/F/G/H/I/J/K/L=1-203"/>
</dbReference>
<dbReference type="PDBsum" id="7U5F"/>
<dbReference type="PDBsum" id="8EGL"/>
<dbReference type="SMR" id="Q9HTM2"/>
<dbReference type="FunCoup" id="Q9HTM2">
    <property type="interactions" value="624"/>
</dbReference>
<dbReference type="STRING" id="208964.PA5336"/>
<dbReference type="PaxDb" id="208964-PA5336"/>
<dbReference type="DNASU" id="878047"/>
<dbReference type="GeneID" id="878047"/>
<dbReference type="KEGG" id="pae:PA5336"/>
<dbReference type="PATRIC" id="fig|208964.12.peg.5591"/>
<dbReference type="PseudoCAP" id="PA5336"/>
<dbReference type="HOGENOM" id="CLU_001715_1_0_6"/>
<dbReference type="InParanoid" id="Q9HTM2"/>
<dbReference type="OrthoDB" id="9808150at2"/>
<dbReference type="PhylomeDB" id="Q9HTM2"/>
<dbReference type="BioCyc" id="PAER208964:G1FZ6-5458-MONOMER"/>
<dbReference type="Proteomes" id="UP000002438">
    <property type="component" value="Chromosome"/>
</dbReference>
<dbReference type="GO" id="GO:0005829">
    <property type="term" value="C:cytosol"/>
    <property type="evidence" value="ECO:0000318"/>
    <property type="project" value="GO_Central"/>
</dbReference>
<dbReference type="GO" id="GO:0005524">
    <property type="term" value="F:ATP binding"/>
    <property type="evidence" value="ECO:0007669"/>
    <property type="project" value="UniProtKB-UniRule"/>
</dbReference>
<dbReference type="GO" id="GO:0004385">
    <property type="term" value="F:guanylate kinase activity"/>
    <property type="evidence" value="ECO:0000318"/>
    <property type="project" value="GO_Central"/>
</dbReference>
<dbReference type="CDD" id="cd00071">
    <property type="entry name" value="GMPK"/>
    <property type="match status" value="1"/>
</dbReference>
<dbReference type="FunFam" id="3.40.50.300:FF:000084">
    <property type="entry name" value="Guanylate kinase"/>
    <property type="match status" value="1"/>
</dbReference>
<dbReference type="FunFam" id="3.30.63.10:FF:000002">
    <property type="entry name" value="Guanylate kinase 1"/>
    <property type="match status" value="1"/>
</dbReference>
<dbReference type="Gene3D" id="3.30.63.10">
    <property type="entry name" value="Guanylate Kinase phosphate binding domain"/>
    <property type="match status" value="1"/>
</dbReference>
<dbReference type="Gene3D" id="3.40.50.300">
    <property type="entry name" value="P-loop containing nucleotide triphosphate hydrolases"/>
    <property type="match status" value="1"/>
</dbReference>
<dbReference type="HAMAP" id="MF_00328">
    <property type="entry name" value="Guanylate_kinase"/>
    <property type="match status" value="1"/>
</dbReference>
<dbReference type="InterPro" id="IPR008145">
    <property type="entry name" value="GK/Ca_channel_bsu"/>
</dbReference>
<dbReference type="InterPro" id="IPR008144">
    <property type="entry name" value="Guanylate_kin-like_dom"/>
</dbReference>
<dbReference type="InterPro" id="IPR017665">
    <property type="entry name" value="Guanylate_kinase"/>
</dbReference>
<dbReference type="InterPro" id="IPR020590">
    <property type="entry name" value="Guanylate_kinase_CS"/>
</dbReference>
<dbReference type="InterPro" id="IPR027417">
    <property type="entry name" value="P-loop_NTPase"/>
</dbReference>
<dbReference type="NCBIfam" id="TIGR03263">
    <property type="entry name" value="guanyl_kin"/>
    <property type="match status" value="1"/>
</dbReference>
<dbReference type="PANTHER" id="PTHR23117:SF13">
    <property type="entry name" value="GUANYLATE KINASE"/>
    <property type="match status" value="1"/>
</dbReference>
<dbReference type="PANTHER" id="PTHR23117">
    <property type="entry name" value="GUANYLATE KINASE-RELATED"/>
    <property type="match status" value="1"/>
</dbReference>
<dbReference type="Pfam" id="PF00625">
    <property type="entry name" value="Guanylate_kin"/>
    <property type="match status" value="1"/>
</dbReference>
<dbReference type="SMART" id="SM00072">
    <property type="entry name" value="GuKc"/>
    <property type="match status" value="1"/>
</dbReference>
<dbReference type="SUPFAM" id="SSF52540">
    <property type="entry name" value="P-loop containing nucleoside triphosphate hydrolases"/>
    <property type="match status" value="1"/>
</dbReference>
<dbReference type="PROSITE" id="PS00856">
    <property type="entry name" value="GUANYLATE_KINASE_1"/>
    <property type="match status" value="1"/>
</dbReference>
<dbReference type="PROSITE" id="PS50052">
    <property type="entry name" value="GUANYLATE_KINASE_2"/>
    <property type="match status" value="1"/>
</dbReference>
<sequence>MSGTLYIVSAPSGAGKTSLVKALLDAAPEVRVSVSHTTRGMRPGEVDGVNYHFTSREEFLAMLERNEFLEHAEVFGNLYGTSQRWVEKTLAEGLDLILEIDWQGAQQVRRLMPEAQSIFILPPSQEALRQRLTNRGQDSDEVIERRMREAVSEMSHYVEYDHLVINDDFAHALDDLKAIFRARQLRQDAQQQRHAELLGRLLA</sequence>
<accession>Q9HTM2</accession>
<keyword id="KW-0002">3D-structure</keyword>
<keyword id="KW-0067">ATP-binding</keyword>
<keyword id="KW-0963">Cytoplasm</keyword>
<keyword id="KW-0418">Kinase</keyword>
<keyword id="KW-0547">Nucleotide-binding</keyword>
<keyword id="KW-1185">Reference proteome</keyword>
<keyword id="KW-0808">Transferase</keyword>
<evidence type="ECO:0000250" key="1"/>
<evidence type="ECO:0000305" key="2"/>
<evidence type="ECO:0007829" key="3">
    <source>
        <dbReference type="PDB" id="7U5F"/>
    </source>
</evidence>
<gene>
    <name type="primary">gmk</name>
    <name type="ordered locus">PA5336</name>
</gene>
<organism>
    <name type="scientific">Pseudomonas aeruginosa (strain ATCC 15692 / DSM 22644 / CIP 104116 / JCM 14847 / LMG 12228 / 1C / PRS 101 / PAO1)</name>
    <dbReference type="NCBI Taxonomy" id="208964"/>
    <lineage>
        <taxon>Bacteria</taxon>
        <taxon>Pseudomonadati</taxon>
        <taxon>Pseudomonadota</taxon>
        <taxon>Gammaproteobacteria</taxon>
        <taxon>Pseudomonadales</taxon>
        <taxon>Pseudomonadaceae</taxon>
        <taxon>Pseudomonas</taxon>
    </lineage>
</organism>
<proteinExistence type="evidence at protein level"/>
<comment type="function">
    <text evidence="1">Essential for recycling GMP and indirectly, cGMP.</text>
</comment>
<comment type="catalytic activity">
    <reaction>
        <text>GMP + ATP = GDP + ADP</text>
        <dbReference type="Rhea" id="RHEA:20780"/>
        <dbReference type="ChEBI" id="CHEBI:30616"/>
        <dbReference type="ChEBI" id="CHEBI:58115"/>
        <dbReference type="ChEBI" id="CHEBI:58189"/>
        <dbReference type="ChEBI" id="CHEBI:456216"/>
        <dbReference type="EC" id="2.7.4.8"/>
    </reaction>
</comment>
<comment type="subcellular location">
    <subcellularLocation>
        <location evidence="1">Cytoplasm</location>
    </subcellularLocation>
</comment>
<comment type="similarity">
    <text evidence="2">Belongs to the guanylate kinase family.</text>
</comment>
<feature type="chain" id="PRO_0000170587" description="Guanylate kinase">
    <location>
        <begin position="1"/>
        <end position="203"/>
    </location>
</feature>
<feature type="domain" description="Guanylate kinase-like">
    <location>
        <begin position="3"/>
        <end position="181"/>
    </location>
</feature>
<feature type="binding site" evidence="1">
    <location>
        <begin position="10"/>
        <end position="17"/>
    </location>
    <ligand>
        <name>ATP</name>
        <dbReference type="ChEBI" id="CHEBI:30616"/>
    </ligand>
</feature>
<feature type="strand" evidence="3">
    <location>
        <begin position="5"/>
        <end position="9"/>
    </location>
</feature>
<feature type="helix" evidence="3">
    <location>
        <begin position="18"/>
        <end position="25"/>
    </location>
</feature>
<feature type="strand" evidence="3">
    <location>
        <begin position="30"/>
        <end position="32"/>
    </location>
</feature>
<feature type="turn" evidence="3">
    <location>
        <begin position="47"/>
        <end position="49"/>
    </location>
</feature>
<feature type="helix" evidence="3">
    <location>
        <begin position="56"/>
        <end position="64"/>
    </location>
</feature>
<feature type="strand" evidence="3">
    <location>
        <begin position="68"/>
        <end position="74"/>
    </location>
</feature>
<feature type="strand" evidence="3">
    <location>
        <begin position="77"/>
        <end position="82"/>
    </location>
</feature>
<feature type="helix" evidence="3">
    <location>
        <begin position="83"/>
        <end position="91"/>
    </location>
</feature>
<feature type="strand" evidence="3">
    <location>
        <begin position="95"/>
        <end position="99"/>
    </location>
</feature>
<feature type="helix" evidence="3">
    <location>
        <begin position="102"/>
        <end position="111"/>
    </location>
</feature>
<feature type="strand" evidence="3">
    <location>
        <begin position="116"/>
        <end position="121"/>
    </location>
</feature>
<feature type="helix" evidence="3">
    <location>
        <begin position="125"/>
        <end position="131"/>
    </location>
</feature>
<feature type="helix" evidence="3">
    <location>
        <begin position="140"/>
        <end position="152"/>
    </location>
</feature>
<feature type="helix" evidence="3">
    <location>
        <begin position="154"/>
        <end position="159"/>
    </location>
</feature>
<feature type="strand" evidence="3">
    <location>
        <begin position="160"/>
        <end position="165"/>
    </location>
</feature>
<feature type="helix" evidence="3">
    <location>
        <begin position="169"/>
        <end position="184"/>
    </location>
</feature>
<feature type="helix" evidence="3">
    <location>
        <begin position="187"/>
        <end position="193"/>
    </location>
</feature>
<feature type="helix" evidence="3">
    <location>
        <begin position="195"/>
        <end position="202"/>
    </location>
</feature>
<protein>
    <recommendedName>
        <fullName>Guanylate kinase</fullName>
        <ecNumber>2.7.4.8</ecNumber>
    </recommendedName>
    <alternativeName>
        <fullName>GMP kinase</fullName>
    </alternativeName>
</protein>
<name>KGUA_PSEAE</name>
<reference key="1">
    <citation type="journal article" date="2000" name="Nature">
        <title>Complete genome sequence of Pseudomonas aeruginosa PAO1, an opportunistic pathogen.</title>
        <authorList>
            <person name="Stover C.K."/>
            <person name="Pham X.-Q.T."/>
            <person name="Erwin A.L."/>
            <person name="Mizoguchi S.D."/>
            <person name="Warrener P."/>
            <person name="Hickey M.J."/>
            <person name="Brinkman F.S.L."/>
            <person name="Hufnagle W.O."/>
            <person name="Kowalik D.J."/>
            <person name="Lagrou M."/>
            <person name="Garber R.L."/>
            <person name="Goltry L."/>
            <person name="Tolentino E."/>
            <person name="Westbrock-Wadman S."/>
            <person name="Yuan Y."/>
            <person name="Brody L.L."/>
            <person name="Coulter S.N."/>
            <person name="Folger K.R."/>
            <person name="Kas A."/>
            <person name="Larbig K."/>
            <person name="Lim R.M."/>
            <person name="Smith K.A."/>
            <person name="Spencer D.H."/>
            <person name="Wong G.K.-S."/>
            <person name="Wu Z."/>
            <person name="Paulsen I.T."/>
            <person name="Reizer J."/>
            <person name="Saier M.H. Jr."/>
            <person name="Hancock R.E.W."/>
            <person name="Lory S."/>
            <person name="Olson M.V."/>
        </authorList>
    </citation>
    <scope>NUCLEOTIDE SEQUENCE [LARGE SCALE GENOMIC DNA]</scope>
    <source>
        <strain>ATCC 15692 / DSM 22644 / CIP 104116 / JCM 14847 / LMG 12228 / 1C / PRS 101 / PAO1</strain>
    </source>
</reference>